<accession>Q66H70</accession>
<keyword id="KW-0158">Chromosome</keyword>
<keyword id="KW-0202">Cytokine</keyword>
<keyword id="KW-0963">Cytoplasm</keyword>
<keyword id="KW-0968">Cytoplasmic vesicle</keyword>
<keyword id="KW-0539">Nucleus</keyword>
<keyword id="KW-1185">Reference proteome</keyword>
<keyword id="KW-0964">Secreted</keyword>
<keyword id="KW-0804">Transcription</keyword>
<protein>
    <recommendedName>
        <fullName>Interleukin-33</fullName>
        <shortName>IL-33</shortName>
    </recommendedName>
</protein>
<comment type="function">
    <text evidence="2 3">Cytokine that binds to and signals through the IL1RL1/ST2 receptor which in turn activates NF-kappa-B and MAPK signaling pathways in target cells. Involved in the maturation of Th2 cells inducing the secretion of T-helper type 2-associated cytokines. Also involved in activation of mast cells, basophils, eosinophils and natural killer cells. Acts as a chemoattractant for Th2 cells, and may function as an 'alarmin', that amplifies immune responses during tissue injury (By similarity). Induces rapid UCP2-dependent mitochondrial rewiring that attenuates the generation of reactive oxygen species and preserves the integrity of Krebs cycle required for persistent production of itaconate and subsequent GATA3-dependent differentiation of inflammation-resolving alternatively activated macrophages (By similarity).</text>
</comment>
<comment type="function">
    <text evidence="1">In quiescent endothelia the uncleaved form is constitutively and abundantly expressed, and acts as a chromatin-associated nuclear factor with transcriptional repressor properties, it may sequester nuclear NF-kappaB/RELA, lowering expression of its targets. This form is rapidely lost upon angiogenic or pro-inflammatory activation (By similarity).</text>
</comment>
<comment type="subunit">
    <text evidence="2">Forms a 1:1:1 heterotrimeric complex with its primary high-affinity receptor IL1RL1 and the coreceptor IL1RAP. Interacts with cargo receptor TMED10; the interaction mediates the translocation from the cytoplasm into the ERGIC (endoplasmic reticulum-Golgi intermediate compartment) and thereby secretion.</text>
</comment>
<comment type="subcellular location">
    <subcellularLocation>
        <location evidence="2">Nucleus</location>
    </subcellularLocation>
    <subcellularLocation>
        <location evidence="2">Chromosome</location>
    </subcellularLocation>
    <subcellularLocation>
        <location evidence="2">Cytoplasm</location>
    </subcellularLocation>
    <subcellularLocation>
        <location evidence="2">Cytoplasmic vesicle</location>
        <location evidence="2">Secretory vesicle</location>
    </subcellularLocation>
    <subcellularLocation>
        <location evidence="2">Secreted</location>
    </subcellularLocation>
    <text evidence="2">Associates with heterochromatin and mitotic chromosomes. The secretion is dependent on protein unfolding and facilitated by the cargo receptor TMED10; it results in protein translocation from the cytoplasm into the ERGIC (endoplasmic reticulum-Golgi intermediate compartment) followed by vesicle entry and secretion.</text>
</comment>
<comment type="domain">
    <text evidence="1">The homeodomain-like HTH domain mediates nuclear localization and heterochromatin association.</text>
</comment>
<comment type="PTM">
    <text evidence="1">The full-length protein can be released from cells and is able to signal via the IL1RL1/ST2 receptor. However, proteolytic processing by CELA1, CSTG/cathepsin G and ELANE/neutrophil elastase produces C-terminal peptides that are more active than the unprocessed full-length protein. May also be proteolytically processed by calpains. Proteolytic cleavage mediated by apoptotic caspases including CASP3 and CASP7 results in IL33 inactivation. In vitro proteolytic cleavage by CASP1 was reported but could not be confirmed in vivo suggesting that IL33 is probably not a direct substrate for that caspase (By similarity).</text>
</comment>
<comment type="similarity">
    <text evidence="4">Belongs to the IL-1 family. Highly divergent.</text>
</comment>
<feature type="chain" id="PRO_0000096793" description="Interleukin-33">
    <location>
        <begin position="1"/>
        <end position="264"/>
    </location>
</feature>
<feature type="propeptide" id="PRO_0000430091" evidence="2">
    <location>
        <begin position="1"/>
        <end position="101"/>
    </location>
</feature>
<feature type="region of interest" description="Homeodomain-like HTH domain" evidence="2">
    <location>
        <begin position="1"/>
        <end position="67"/>
    </location>
</feature>
<feature type="region of interest" description="Interaction with RELA" evidence="3">
    <location>
        <begin position="66"/>
        <end position="108"/>
    </location>
</feature>
<feature type="site" description="Cleavage; by CTSG and ELANE" evidence="3">
    <location>
        <begin position="101"/>
        <end position="102"/>
    </location>
</feature>
<feature type="site" description="Cleavage; by ELANE" evidence="3">
    <location>
        <begin position="108"/>
        <end position="109"/>
    </location>
</feature>
<evidence type="ECO:0000250" key="1"/>
<evidence type="ECO:0000250" key="2">
    <source>
        <dbReference type="UniProtKB" id="O95760"/>
    </source>
</evidence>
<evidence type="ECO:0000250" key="3">
    <source>
        <dbReference type="UniProtKB" id="Q8BVZ5"/>
    </source>
</evidence>
<evidence type="ECO:0000305" key="4"/>
<evidence type="ECO:0000312" key="5">
    <source>
        <dbReference type="RGD" id="1311155"/>
    </source>
</evidence>
<organism>
    <name type="scientific">Rattus norvegicus</name>
    <name type="common">Rat</name>
    <dbReference type="NCBI Taxonomy" id="10116"/>
    <lineage>
        <taxon>Eukaryota</taxon>
        <taxon>Metazoa</taxon>
        <taxon>Chordata</taxon>
        <taxon>Craniata</taxon>
        <taxon>Vertebrata</taxon>
        <taxon>Euteleostomi</taxon>
        <taxon>Mammalia</taxon>
        <taxon>Eutheria</taxon>
        <taxon>Euarchontoglires</taxon>
        <taxon>Glires</taxon>
        <taxon>Rodentia</taxon>
        <taxon>Myomorpha</taxon>
        <taxon>Muroidea</taxon>
        <taxon>Muridae</taxon>
        <taxon>Murinae</taxon>
        <taxon>Rattus</taxon>
    </lineage>
</organism>
<proteinExistence type="evidence at transcript level"/>
<sequence>MRPRMKYSNSKISPAKCDSTSGRALVPPCKITRSQQKTKDICHVYCMRLRSGLTIRKETCYFGKEPAKRYSLKSGSKHEGRLSTCLPDSRKRSLLGSIQAFAASVDTLSIQGTSLLTESCALSTYNDQSVSFVLENGCYVINVEDCGKNQEKDKVLLRYYESSFPAQSGDGVDGKKLMVNMSPIKDTDIWLNANDKDYSVELQKGDVSPPDQAFFVLHKKSSDFVSFECKNLPGTYIGVKDNQLALVEENDESCNNIMFKLSKM</sequence>
<gene>
    <name evidence="5" type="primary">Il33</name>
</gene>
<reference key="1">
    <citation type="journal article" date="2004" name="Genome Res.">
        <title>The status, quality, and expansion of the NIH full-length cDNA project: the Mammalian Gene Collection (MGC).</title>
        <authorList>
            <consortium name="The MGC Project Team"/>
        </authorList>
    </citation>
    <scope>NUCLEOTIDE SEQUENCE [LARGE SCALE MRNA]</scope>
    <source>
        <tissue>Kidney</tissue>
    </source>
</reference>
<dbReference type="EMBL" id="BC081993">
    <property type="protein sequence ID" value="AAH81993.1"/>
    <property type="molecule type" value="mRNA"/>
</dbReference>
<dbReference type="RefSeq" id="NP_001014188.1">
    <property type="nucleotide sequence ID" value="NM_001014166.2"/>
</dbReference>
<dbReference type="RefSeq" id="NP_001406427.1">
    <property type="nucleotide sequence ID" value="NM_001419498.1"/>
</dbReference>
<dbReference type="RefSeq" id="XP_038940419.1">
    <property type="nucleotide sequence ID" value="XM_039084491.2"/>
</dbReference>
<dbReference type="RefSeq" id="XP_063124701.1">
    <property type="nucleotide sequence ID" value="XM_063268631.1"/>
</dbReference>
<dbReference type="RefSeq" id="XP_063124706.1">
    <property type="nucleotide sequence ID" value="XM_063268636.1"/>
</dbReference>
<dbReference type="SMR" id="Q66H70"/>
<dbReference type="FunCoup" id="Q66H70">
    <property type="interactions" value="15"/>
</dbReference>
<dbReference type="STRING" id="10116.ENSRNOP00000022056"/>
<dbReference type="iPTMnet" id="Q66H70"/>
<dbReference type="PhosphoSitePlus" id="Q66H70"/>
<dbReference type="PaxDb" id="10116-ENSRNOP00000022056"/>
<dbReference type="Ensembl" id="ENSRNOT00000022056.8">
    <property type="protein sequence ID" value="ENSRNOP00000022056.7"/>
    <property type="gene ID" value="ENSRNOG00000016456.8"/>
</dbReference>
<dbReference type="GeneID" id="361749"/>
<dbReference type="KEGG" id="rno:361749"/>
<dbReference type="UCSC" id="RGD:1311155">
    <property type="organism name" value="rat"/>
</dbReference>
<dbReference type="AGR" id="RGD:1311155"/>
<dbReference type="CTD" id="90865"/>
<dbReference type="RGD" id="1311155">
    <property type="gene designation" value="Il33"/>
</dbReference>
<dbReference type="eggNOG" id="ENOG502RW83">
    <property type="taxonomic scope" value="Eukaryota"/>
</dbReference>
<dbReference type="GeneTree" id="ENSGT00390000005185"/>
<dbReference type="InParanoid" id="Q66H70"/>
<dbReference type="OMA" id="KTACYFR"/>
<dbReference type="OrthoDB" id="9836513at2759"/>
<dbReference type="PhylomeDB" id="Q66H70"/>
<dbReference type="TreeFam" id="TF338120"/>
<dbReference type="Reactome" id="R-RNO-1257604">
    <property type="pathway name" value="PIP3 activates AKT signaling"/>
</dbReference>
<dbReference type="Reactome" id="R-RNO-5689880">
    <property type="pathway name" value="Ub-specific processing proteases"/>
</dbReference>
<dbReference type="Reactome" id="R-RNO-6811558">
    <property type="pathway name" value="PI5P, PP2A and IER3 Regulate PI3K/AKT Signaling"/>
</dbReference>
<dbReference type="Reactome" id="R-RNO-9014843">
    <property type="pathway name" value="Interleukin-33 signaling"/>
</dbReference>
<dbReference type="PRO" id="PR:Q66H70"/>
<dbReference type="Proteomes" id="UP000002494">
    <property type="component" value="Chromosome 1"/>
</dbReference>
<dbReference type="GO" id="GO:0005694">
    <property type="term" value="C:chromosome"/>
    <property type="evidence" value="ECO:0007669"/>
    <property type="project" value="UniProtKB-SubCell"/>
</dbReference>
<dbReference type="GO" id="GO:0005737">
    <property type="term" value="C:cytoplasm"/>
    <property type="evidence" value="ECO:0000266"/>
    <property type="project" value="RGD"/>
</dbReference>
<dbReference type="GO" id="GO:0005615">
    <property type="term" value="C:extracellular space"/>
    <property type="evidence" value="ECO:0000266"/>
    <property type="project" value="RGD"/>
</dbReference>
<dbReference type="GO" id="GO:0005634">
    <property type="term" value="C:nucleus"/>
    <property type="evidence" value="ECO:0000266"/>
    <property type="project" value="RGD"/>
</dbReference>
<dbReference type="GO" id="GO:0030133">
    <property type="term" value="C:transport vesicle"/>
    <property type="evidence" value="ECO:0007669"/>
    <property type="project" value="UniProtKB-SubCell"/>
</dbReference>
<dbReference type="GO" id="GO:0005125">
    <property type="term" value="F:cytokine activity"/>
    <property type="evidence" value="ECO:0000266"/>
    <property type="project" value="RGD"/>
</dbReference>
<dbReference type="GO" id="GO:0002112">
    <property type="term" value="F:interleukin-33 receptor binding"/>
    <property type="evidence" value="ECO:0000266"/>
    <property type="project" value="RGD"/>
</dbReference>
<dbReference type="GO" id="GO:0140367">
    <property type="term" value="P:antibacterial innate immune response"/>
    <property type="evidence" value="ECO:0000266"/>
    <property type="project" value="RGD"/>
</dbReference>
<dbReference type="GO" id="GO:0071260">
    <property type="term" value="P:cellular response to mechanical stimulus"/>
    <property type="evidence" value="ECO:0000270"/>
    <property type="project" value="RGD"/>
</dbReference>
<dbReference type="GO" id="GO:0051607">
    <property type="term" value="P:defense response to virus"/>
    <property type="evidence" value="ECO:0000266"/>
    <property type="project" value="RGD"/>
</dbReference>
<dbReference type="GO" id="GO:0097191">
    <property type="term" value="P:extrinsic apoptotic signaling pathway"/>
    <property type="evidence" value="ECO:0000266"/>
    <property type="project" value="RGD"/>
</dbReference>
<dbReference type="GO" id="GO:0010467">
    <property type="term" value="P:gene expression"/>
    <property type="evidence" value="ECO:0000266"/>
    <property type="project" value="RGD"/>
</dbReference>
<dbReference type="GO" id="GO:0038172">
    <property type="term" value="P:interleukin-33-mediated signaling pathway"/>
    <property type="evidence" value="ECO:0000266"/>
    <property type="project" value="RGD"/>
</dbReference>
<dbReference type="GO" id="GO:0002281">
    <property type="term" value="P:macrophage activation involved in immune response"/>
    <property type="evidence" value="ECO:0000266"/>
    <property type="project" value="RGD"/>
</dbReference>
<dbReference type="GO" id="GO:0030225">
    <property type="term" value="P:macrophage differentiation"/>
    <property type="evidence" value="ECO:0000250"/>
    <property type="project" value="UniProtKB"/>
</dbReference>
<dbReference type="GO" id="GO:0002282">
    <property type="term" value="P:microglial cell activation involved in immune response"/>
    <property type="evidence" value="ECO:0000266"/>
    <property type="project" value="RGD"/>
</dbReference>
<dbReference type="GO" id="GO:0061518">
    <property type="term" value="P:microglial cell proliferation"/>
    <property type="evidence" value="ECO:0000266"/>
    <property type="project" value="RGD"/>
</dbReference>
<dbReference type="GO" id="GO:0002638">
    <property type="term" value="P:negative regulation of immunoglobulin production"/>
    <property type="evidence" value="ECO:0000266"/>
    <property type="project" value="RGD"/>
</dbReference>
<dbReference type="GO" id="GO:0106015">
    <property type="term" value="P:negative regulation of inflammatory response to wounding"/>
    <property type="evidence" value="ECO:0000266"/>
    <property type="project" value="RGD"/>
</dbReference>
<dbReference type="GO" id="GO:0002686">
    <property type="term" value="P:negative regulation of leukocyte migration"/>
    <property type="evidence" value="ECO:0000266"/>
    <property type="project" value="RGD"/>
</dbReference>
<dbReference type="GO" id="GO:0120042">
    <property type="term" value="P:negative regulation of macrophage proliferation"/>
    <property type="evidence" value="ECO:0000266"/>
    <property type="project" value="RGD"/>
</dbReference>
<dbReference type="GO" id="GO:0002826">
    <property type="term" value="P:negative regulation of T-helper 1 type immune response"/>
    <property type="evidence" value="ECO:0000266"/>
    <property type="project" value="RGD"/>
</dbReference>
<dbReference type="GO" id="GO:0000122">
    <property type="term" value="P:negative regulation of transcription by RNA polymerase II"/>
    <property type="evidence" value="ECO:0000266"/>
    <property type="project" value="RGD"/>
</dbReference>
<dbReference type="GO" id="GO:0032689">
    <property type="term" value="P:negative regulation of type II interferon production"/>
    <property type="evidence" value="ECO:0000266"/>
    <property type="project" value="RGD"/>
</dbReference>
<dbReference type="GO" id="GO:0010186">
    <property type="term" value="P:positive regulation of cellular defense response"/>
    <property type="evidence" value="ECO:0000266"/>
    <property type="project" value="RGD"/>
</dbReference>
<dbReference type="GO" id="GO:0032722">
    <property type="term" value="P:positive regulation of chemokine production"/>
    <property type="evidence" value="ECO:0000266"/>
    <property type="project" value="RGD"/>
</dbReference>
<dbReference type="GO" id="GO:0001819">
    <property type="term" value="P:positive regulation of cytokine production"/>
    <property type="evidence" value="ECO:0000318"/>
    <property type="project" value="GO_Central"/>
</dbReference>
<dbReference type="GO" id="GO:0010628">
    <property type="term" value="P:positive regulation of gene expression"/>
    <property type="evidence" value="ECO:0000266"/>
    <property type="project" value="RGD"/>
</dbReference>
<dbReference type="GO" id="GO:0002639">
    <property type="term" value="P:positive regulation of immunoglobulin production"/>
    <property type="evidence" value="ECO:0000266"/>
    <property type="project" value="RGD"/>
</dbReference>
<dbReference type="GO" id="GO:0050729">
    <property type="term" value="P:positive regulation of inflammatory response"/>
    <property type="evidence" value="ECO:0000266"/>
    <property type="project" value="RGD"/>
</dbReference>
<dbReference type="GO" id="GO:0032736">
    <property type="term" value="P:positive regulation of interleukin-13 production"/>
    <property type="evidence" value="ECO:0000266"/>
    <property type="project" value="RGD"/>
</dbReference>
<dbReference type="GO" id="GO:0032753">
    <property type="term" value="P:positive regulation of interleukin-4 production"/>
    <property type="evidence" value="ECO:0000266"/>
    <property type="project" value="RGD"/>
</dbReference>
<dbReference type="GO" id="GO:0032754">
    <property type="term" value="P:positive regulation of interleukin-5 production"/>
    <property type="evidence" value="ECO:0000266"/>
    <property type="project" value="RGD"/>
</dbReference>
<dbReference type="GO" id="GO:0032755">
    <property type="term" value="P:positive regulation of interleukin-6 production"/>
    <property type="evidence" value="ECO:0000266"/>
    <property type="project" value="RGD"/>
</dbReference>
<dbReference type="GO" id="GO:0043032">
    <property type="term" value="P:positive regulation of macrophage activation"/>
    <property type="evidence" value="ECO:0000266"/>
    <property type="project" value="RGD"/>
</dbReference>
<dbReference type="GO" id="GO:0045345">
    <property type="term" value="P:positive regulation of MHC class I biosynthetic process"/>
    <property type="evidence" value="ECO:0000266"/>
    <property type="project" value="RGD"/>
</dbReference>
<dbReference type="GO" id="GO:0045348">
    <property type="term" value="P:positive regulation of MHC class II biosynthetic process"/>
    <property type="evidence" value="ECO:0000266"/>
    <property type="project" value="RGD"/>
</dbReference>
<dbReference type="GO" id="GO:0048714">
    <property type="term" value="P:positive regulation of oligodendrocyte differentiation"/>
    <property type="evidence" value="ECO:0000315"/>
    <property type="project" value="RGD"/>
</dbReference>
<dbReference type="GO" id="GO:0032436">
    <property type="term" value="P:positive regulation of proteasomal ubiquitin-dependent protein catabolic process"/>
    <property type="evidence" value="ECO:0000266"/>
    <property type="project" value="RGD"/>
</dbReference>
<dbReference type="GO" id="GO:0045944">
    <property type="term" value="P:positive regulation of transcription by RNA polymerase II"/>
    <property type="evidence" value="ECO:0000266"/>
    <property type="project" value="RGD"/>
</dbReference>
<dbReference type="GO" id="GO:0032760">
    <property type="term" value="P:positive regulation of tumor necrosis factor production"/>
    <property type="evidence" value="ECO:0000266"/>
    <property type="project" value="RGD"/>
</dbReference>
<dbReference type="GO" id="GO:0002830">
    <property type="term" value="P:positive regulation of type 2 immune response"/>
    <property type="evidence" value="ECO:0000266"/>
    <property type="project" value="RGD"/>
</dbReference>
<dbReference type="GO" id="GO:0006606">
    <property type="term" value="P:protein import into nucleus"/>
    <property type="evidence" value="ECO:0000266"/>
    <property type="project" value="RGD"/>
</dbReference>
<dbReference type="GO" id="GO:0009611">
    <property type="term" value="P:response to wounding"/>
    <property type="evidence" value="ECO:0000266"/>
    <property type="project" value="RGD"/>
</dbReference>
<dbReference type="GO" id="GO:0042092">
    <property type="term" value="P:type 2 immune response"/>
    <property type="evidence" value="ECO:0000266"/>
    <property type="project" value="RGD"/>
</dbReference>
<dbReference type="CDD" id="cd23299">
    <property type="entry name" value="beta-trefoil_IL33"/>
    <property type="match status" value="1"/>
</dbReference>
<dbReference type="FunFam" id="2.80.10.50:FF:000052">
    <property type="entry name" value="Interleukin 33"/>
    <property type="match status" value="1"/>
</dbReference>
<dbReference type="Gene3D" id="2.80.10.50">
    <property type="match status" value="1"/>
</dbReference>
<dbReference type="InterPro" id="IPR026145">
    <property type="entry name" value="IL-33"/>
</dbReference>
<dbReference type="InterPro" id="IPR053902">
    <property type="entry name" value="IL33_C"/>
</dbReference>
<dbReference type="PANTHER" id="PTHR21114">
    <property type="entry name" value="DVS27 PROTEIN"/>
    <property type="match status" value="1"/>
</dbReference>
<dbReference type="PANTHER" id="PTHR21114:SF0">
    <property type="entry name" value="INTERLEUKIN-33"/>
    <property type="match status" value="1"/>
</dbReference>
<dbReference type="Pfam" id="PF15095">
    <property type="entry name" value="IL33_bt"/>
    <property type="match status" value="1"/>
</dbReference>
<name>IL33_RAT</name>